<comment type="catalytic activity">
    <reaction evidence="1">
        <text>tRNA(His) + L-histidine + ATP = L-histidyl-tRNA(His) + AMP + diphosphate + H(+)</text>
        <dbReference type="Rhea" id="RHEA:17313"/>
        <dbReference type="Rhea" id="RHEA-COMP:9665"/>
        <dbReference type="Rhea" id="RHEA-COMP:9689"/>
        <dbReference type="ChEBI" id="CHEBI:15378"/>
        <dbReference type="ChEBI" id="CHEBI:30616"/>
        <dbReference type="ChEBI" id="CHEBI:33019"/>
        <dbReference type="ChEBI" id="CHEBI:57595"/>
        <dbReference type="ChEBI" id="CHEBI:78442"/>
        <dbReference type="ChEBI" id="CHEBI:78527"/>
        <dbReference type="ChEBI" id="CHEBI:456215"/>
        <dbReference type="EC" id="6.1.1.21"/>
    </reaction>
</comment>
<comment type="subunit">
    <text evidence="1">Homodimer.</text>
</comment>
<comment type="subcellular location">
    <subcellularLocation>
        <location evidence="1">Cytoplasm</location>
    </subcellularLocation>
</comment>
<comment type="similarity">
    <text evidence="1">Belongs to the class-II aminoacyl-tRNA synthetase family.</text>
</comment>
<dbReference type="EC" id="6.1.1.21" evidence="1"/>
<dbReference type="EMBL" id="CR522870">
    <property type="protein sequence ID" value="CAG35300.1"/>
    <property type="molecule type" value="Genomic_DNA"/>
</dbReference>
<dbReference type="RefSeq" id="WP_011187816.1">
    <property type="nucleotide sequence ID" value="NC_006138.1"/>
</dbReference>
<dbReference type="SMR" id="Q6AQS3"/>
<dbReference type="STRING" id="177439.DP0571"/>
<dbReference type="KEGG" id="dps:DP0571"/>
<dbReference type="eggNOG" id="COG0124">
    <property type="taxonomic scope" value="Bacteria"/>
</dbReference>
<dbReference type="HOGENOM" id="CLU_025113_1_1_7"/>
<dbReference type="OrthoDB" id="9800814at2"/>
<dbReference type="Proteomes" id="UP000000602">
    <property type="component" value="Chromosome"/>
</dbReference>
<dbReference type="GO" id="GO:0005737">
    <property type="term" value="C:cytoplasm"/>
    <property type="evidence" value="ECO:0007669"/>
    <property type="project" value="UniProtKB-SubCell"/>
</dbReference>
<dbReference type="GO" id="GO:0005524">
    <property type="term" value="F:ATP binding"/>
    <property type="evidence" value="ECO:0007669"/>
    <property type="project" value="UniProtKB-UniRule"/>
</dbReference>
<dbReference type="GO" id="GO:0004821">
    <property type="term" value="F:histidine-tRNA ligase activity"/>
    <property type="evidence" value="ECO:0007669"/>
    <property type="project" value="UniProtKB-UniRule"/>
</dbReference>
<dbReference type="GO" id="GO:0006427">
    <property type="term" value="P:histidyl-tRNA aminoacylation"/>
    <property type="evidence" value="ECO:0007669"/>
    <property type="project" value="UniProtKB-UniRule"/>
</dbReference>
<dbReference type="CDD" id="cd00773">
    <property type="entry name" value="HisRS-like_core"/>
    <property type="match status" value="1"/>
</dbReference>
<dbReference type="CDD" id="cd00859">
    <property type="entry name" value="HisRS_anticodon"/>
    <property type="match status" value="1"/>
</dbReference>
<dbReference type="FunFam" id="3.30.930.10:FF:000005">
    <property type="entry name" value="Histidine--tRNA ligase"/>
    <property type="match status" value="1"/>
</dbReference>
<dbReference type="Gene3D" id="3.40.50.800">
    <property type="entry name" value="Anticodon-binding domain"/>
    <property type="match status" value="1"/>
</dbReference>
<dbReference type="Gene3D" id="3.30.930.10">
    <property type="entry name" value="Bira Bifunctional Protein, Domain 2"/>
    <property type="match status" value="1"/>
</dbReference>
<dbReference type="HAMAP" id="MF_00127">
    <property type="entry name" value="His_tRNA_synth"/>
    <property type="match status" value="1"/>
</dbReference>
<dbReference type="InterPro" id="IPR006195">
    <property type="entry name" value="aa-tRNA-synth_II"/>
</dbReference>
<dbReference type="InterPro" id="IPR045864">
    <property type="entry name" value="aa-tRNA-synth_II/BPL/LPL"/>
</dbReference>
<dbReference type="InterPro" id="IPR004154">
    <property type="entry name" value="Anticodon-bd"/>
</dbReference>
<dbReference type="InterPro" id="IPR036621">
    <property type="entry name" value="Anticodon-bd_dom_sf"/>
</dbReference>
<dbReference type="InterPro" id="IPR015807">
    <property type="entry name" value="His-tRNA-ligase"/>
</dbReference>
<dbReference type="InterPro" id="IPR041715">
    <property type="entry name" value="HisRS-like_core"/>
</dbReference>
<dbReference type="InterPro" id="IPR004516">
    <property type="entry name" value="HisRS/HisZ"/>
</dbReference>
<dbReference type="InterPro" id="IPR033656">
    <property type="entry name" value="HisRS_anticodon"/>
</dbReference>
<dbReference type="NCBIfam" id="TIGR00442">
    <property type="entry name" value="hisS"/>
    <property type="match status" value="1"/>
</dbReference>
<dbReference type="PANTHER" id="PTHR43707:SF1">
    <property type="entry name" value="HISTIDINE--TRNA LIGASE, MITOCHONDRIAL-RELATED"/>
    <property type="match status" value="1"/>
</dbReference>
<dbReference type="PANTHER" id="PTHR43707">
    <property type="entry name" value="HISTIDYL-TRNA SYNTHETASE"/>
    <property type="match status" value="1"/>
</dbReference>
<dbReference type="Pfam" id="PF03129">
    <property type="entry name" value="HGTP_anticodon"/>
    <property type="match status" value="1"/>
</dbReference>
<dbReference type="Pfam" id="PF13393">
    <property type="entry name" value="tRNA-synt_His"/>
    <property type="match status" value="1"/>
</dbReference>
<dbReference type="PIRSF" id="PIRSF001549">
    <property type="entry name" value="His-tRNA_synth"/>
    <property type="match status" value="1"/>
</dbReference>
<dbReference type="SUPFAM" id="SSF52954">
    <property type="entry name" value="Class II aaRS ABD-related"/>
    <property type="match status" value="1"/>
</dbReference>
<dbReference type="SUPFAM" id="SSF55681">
    <property type="entry name" value="Class II aaRS and biotin synthetases"/>
    <property type="match status" value="1"/>
</dbReference>
<dbReference type="PROSITE" id="PS50862">
    <property type="entry name" value="AA_TRNA_LIGASE_II"/>
    <property type="match status" value="1"/>
</dbReference>
<keyword id="KW-0030">Aminoacyl-tRNA synthetase</keyword>
<keyword id="KW-0067">ATP-binding</keyword>
<keyword id="KW-0963">Cytoplasm</keyword>
<keyword id="KW-0436">Ligase</keyword>
<keyword id="KW-0547">Nucleotide-binding</keyword>
<keyword id="KW-0648">Protein biosynthesis</keyword>
<keyword id="KW-1185">Reference proteome</keyword>
<evidence type="ECO:0000255" key="1">
    <source>
        <dbReference type="HAMAP-Rule" id="MF_00127"/>
    </source>
</evidence>
<protein>
    <recommendedName>
        <fullName evidence="1">Histidine--tRNA ligase</fullName>
        <ecNumber evidence="1">6.1.1.21</ecNumber>
    </recommendedName>
    <alternativeName>
        <fullName evidence="1">Histidyl-tRNA synthetase</fullName>
        <shortName evidence="1">HisRS</shortName>
    </alternativeName>
</protein>
<sequence length="429" mass="47632">MLIGYILGDGTLKIKVLKGFKDILPGEVELWQQVEKITRDIFTRHNFSEIRMPILEQTDLFARSIGEATDIVEKEMYTFVDKKVTMRPEATASLIRAYIENGLYVAKPVQRLFTIGPMFRHERPQKGRLRQFHQMDIEVLGSVNPLVDAELMAMGSMVFRTLGINVRLEMNSLGCPECRPVYRQALVEFIEDRFEHLCDDCKRRSKTNPLRVLDCKNAGCRAQVEEAPSILDYLCGDCADHFDTVCTTLESLEIPYSLNKFMVRGLDYYCRTTFEFITDDLGAQSAVGAGGRYDGLVEKLGGPVGMPGIGFAIGMERLILLLQQKETEFVAEKLDLFVIGLGDAATKLACILSQDLRGLGVGVAVDYEGRSLKAQMKLANKAGVAATLILGENEIETGKAVLKNMDSQEQCEVALVAGDIFAALAMSAQ</sequence>
<organism>
    <name type="scientific">Desulfotalea psychrophila (strain LSv54 / DSM 12343)</name>
    <dbReference type="NCBI Taxonomy" id="177439"/>
    <lineage>
        <taxon>Bacteria</taxon>
        <taxon>Pseudomonadati</taxon>
        <taxon>Thermodesulfobacteriota</taxon>
        <taxon>Desulfobulbia</taxon>
        <taxon>Desulfobulbales</taxon>
        <taxon>Desulfocapsaceae</taxon>
        <taxon>Desulfotalea</taxon>
    </lineage>
</organism>
<name>SYH_DESPS</name>
<gene>
    <name evidence="1" type="primary">hisS</name>
    <name type="ordered locus">DP0571</name>
</gene>
<reference key="1">
    <citation type="journal article" date="2004" name="Environ. Microbiol.">
        <title>The genome of Desulfotalea psychrophila, a sulfate-reducing bacterium from permanently cold Arctic sediments.</title>
        <authorList>
            <person name="Rabus R."/>
            <person name="Ruepp A."/>
            <person name="Frickey T."/>
            <person name="Rattei T."/>
            <person name="Fartmann B."/>
            <person name="Stark M."/>
            <person name="Bauer M."/>
            <person name="Zibat A."/>
            <person name="Lombardot T."/>
            <person name="Becker I."/>
            <person name="Amann J."/>
            <person name="Gellner K."/>
            <person name="Teeling H."/>
            <person name="Leuschner W.D."/>
            <person name="Gloeckner F.-O."/>
            <person name="Lupas A.N."/>
            <person name="Amann R."/>
            <person name="Klenk H.-P."/>
        </authorList>
    </citation>
    <scope>NUCLEOTIDE SEQUENCE [LARGE SCALE GENOMIC DNA]</scope>
    <source>
        <strain>DSM 12343 / LSv54</strain>
    </source>
</reference>
<accession>Q6AQS3</accession>
<feature type="chain" id="PRO_0000136154" description="Histidine--tRNA ligase">
    <location>
        <begin position="1"/>
        <end position="429"/>
    </location>
</feature>
<proteinExistence type="inferred from homology"/>